<evidence type="ECO:0000269" key="1">
    <source>
    </source>
</evidence>
<evidence type="ECO:0000305" key="2"/>
<evidence type="ECO:0007829" key="3">
    <source>
        <dbReference type="PDB" id="2OQ2"/>
    </source>
</evidence>
<comment type="function">
    <text>The NADP dependent reduction of PAPS into sulfite involves thioredoxin which probably plays the role of a thiol carrier.</text>
</comment>
<comment type="catalytic activity">
    <reaction>
        <text>[thioredoxin]-disulfide + sulfite + adenosine 3',5'-bisphosphate + 2 H(+) = [thioredoxin]-dithiol + 3'-phosphoadenylyl sulfate</text>
        <dbReference type="Rhea" id="RHEA:11724"/>
        <dbReference type="Rhea" id="RHEA-COMP:10698"/>
        <dbReference type="Rhea" id="RHEA-COMP:10700"/>
        <dbReference type="ChEBI" id="CHEBI:15378"/>
        <dbReference type="ChEBI" id="CHEBI:17359"/>
        <dbReference type="ChEBI" id="CHEBI:29950"/>
        <dbReference type="ChEBI" id="CHEBI:50058"/>
        <dbReference type="ChEBI" id="CHEBI:58339"/>
        <dbReference type="ChEBI" id="CHEBI:58343"/>
        <dbReference type="EC" id="1.8.4.8"/>
    </reaction>
</comment>
<comment type="pathway">
    <text>Sulfur metabolism; hydrogen sulfide biosynthesis; sulfite from sulfate: step 3/3.</text>
</comment>
<comment type="miscellaneous">
    <text evidence="1">Present with 217 molecules/cell in log phase SD medium.</text>
</comment>
<comment type="similarity">
    <text evidence="2">Belongs to the PAPS reductase family. CysH subfamily.</text>
</comment>
<reference key="1">
    <citation type="journal article" date="1990" name="J. Biol. Chem.">
        <title>Gene-enzyme relationship in the sulfate assimilation pathway of Saccharomyces cerevisiae. Study of the 3'-phosphoadenylylsulfate reductase structural gene.</title>
        <authorList>
            <person name="Thomas D."/>
            <person name="Barbey R."/>
            <person name="Surdin-Kerjan Y."/>
        </authorList>
    </citation>
    <scope>NUCLEOTIDE SEQUENCE [GENOMIC DNA]</scope>
</reference>
<reference key="2">
    <citation type="journal article" date="1997" name="Nature">
        <title>The nucleotide sequence of Saccharomyces cerevisiae chromosome XVI.</title>
        <authorList>
            <person name="Bussey H."/>
            <person name="Storms R.K."/>
            <person name="Ahmed A."/>
            <person name="Albermann K."/>
            <person name="Allen E."/>
            <person name="Ansorge W."/>
            <person name="Araujo R."/>
            <person name="Aparicio A."/>
            <person name="Barrell B.G."/>
            <person name="Badcock K."/>
            <person name="Benes V."/>
            <person name="Botstein D."/>
            <person name="Bowman S."/>
            <person name="Brueckner M."/>
            <person name="Carpenter J."/>
            <person name="Cherry J.M."/>
            <person name="Chung E."/>
            <person name="Churcher C.M."/>
            <person name="Coster F."/>
            <person name="Davis K."/>
            <person name="Davis R.W."/>
            <person name="Dietrich F.S."/>
            <person name="Delius H."/>
            <person name="DiPaolo T."/>
            <person name="Dubois E."/>
            <person name="Duesterhoeft A."/>
            <person name="Duncan M."/>
            <person name="Floeth M."/>
            <person name="Fortin N."/>
            <person name="Friesen J.D."/>
            <person name="Fritz C."/>
            <person name="Goffeau A."/>
            <person name="Hall J."/>
            <person name="Hebling U."/>
            <person name="Heumann K."/>
            <person name="Hilbert H."/>
            <person name="Hillier L.W."/>
            <person name="Hunicke-Smith S."/>
            <person name="Hyman R.W."/>
            <person name="Johnston M."/>
            <person name="Kalman S."/>
            <person name="Kleine K."/>
            <person name="Komp C."/>
            <person name="Kurdi O."/>
            <person name="Lashkari D."/>
            <person name="Lew H."/>
            <person name="Lin A."/>
            <person name="Lin D."/>
            <person name="Louis E.J."/>
            <person name="Marathe R."/>
            <person name="Messenguy F."/>
            <person name="Mewes H.-W."/>
            <person name="Mirtipati S."/>
            <person name="Moestl D."/>
            <person name="Mueller-Auer S."/>
            <person name="Namath A."/>
            <person name="Nentwich U."/>
            <person name="Oefner P."/>
            <person name="Pearson D."/>
            <person name="Petel F.X."/>
            <person name="Pohl T.M."/>
            <person name="Purnelle B."/>
            <person name="Rajandream M.A."/>
            <person name="Rechmann S."/>
            <person name="Rieger M."/>
            <person name="Riles L."/>
            <person name="Roberts D."/>
            <person name="Schaefer M."/>
            <person name="Scharfe M."/>
            <person name="Scherens B."/>
            <person name="Schramm S."/>
            <person name="Schroeder M."/>
            <person name="Sdicu A.-M."/>
            <person name="Tettelin H."/>
            <person name="Urrestarazu L.A."/>
            <person name="Ushinsky S."/>
            <person name="Vierendeels F."/>
            <person name="Vissers S."/>
            <person name="Voss H."/>
            <person name="Walsh S.V."/>
            <person name="Wambutt R."/>
            <person name="Wang Y."/>
            <person name="Wedler E."/>
            <person name="Wedler H."/>
            <person name="Winnett E."/>
            <person name="Zhong W.-W."/>
            <person name="Zollner A."/>
            <person name="Vo D.H."/>
            <person name="Hani J."/>
        </authorList>
    </citation>
    <scope>NUCLEOTIDE SEQUENCE [LARGE SCALE GENOMIC DNA]</scope>
    <source>
        <strain>ATCC 204508 / S288c</strain>
    </source>
</reference>
<reference key="3">
    <citation type="journal article" date="2014" name="G3 (Bethesda)">
        <title>The reference genome sequence of Saccharomyces cerevisiae: Then and now.</title>
        <authorList>
            <person name="Engel S.R."/>
            <person name="Dietrich F.S."/>
            <person name="Fisk D.G."/>
            <person name="Binkley G."/>
            <person name="Balakrishnan R."/>
            <person name="Costanzo M.C."/>
            <person name="Dwight S.S."/>
            <person name="Hitz B.C."/>
            <person name="Karra K."/>
            <person name="Nash R.S."/>
            <person name="Weng S."/>
            <person name="Wong E.D."/>
            <person name="Lloyd P."/>
            <person name="Skrzypek M.S."/>
            <person name="Miyasato S.R."/>
            <person name="Simison M."/>
            <person name="Cherry J.M."/>
        </authorList>
    </citation>
    <scope>GENOME REANNOTATION</scope>
    <source>
        <strain>ATCC 204508 / S288c</strain>
    </source>
</reference>
<reference key="4">
    <citation type="journal article" date="2007" name="Genome Res.">
        <title>Approaching a complete repository of sequence-verified protein-encoding clones for Saccharomyces cerevisiae.</title>
        <authorList>
            <person name="Hu Y."/>
            <person name="Rolfs A."/>
            <person name="Bhullar B."/>
            <person name="Murthy T.V.S."/>
            <person name="Zhu C."/>
            <person name="Berger M.F."/>
            <person name="Camargo A.A."/>
            <person name="Kelley F."/>
            <person name="McCarron S."/>
            <person name="Jepson D."/>
            <person name="Richardson A."/>
            <person name="Raphael J."/>
            <person name="Moreira D."/>
            <person name="Taycher E."/>
            <person name="Zuo D."/>
            <person name="Mohr S."/>
            <person name="Kane M.F."/>
            <person name="Williamson J."/>
            <person name="Simpson A.J.G."/>
            <person name="Bulyk M.L."/>
            <person name="Harlow E."/>
            <person name="Marsischky G."/>
            <person name="Kolodner R.D."/>
            <person name="LaBaer J."/>
        </authorList>
    </citation>
    <scope>NUCLEOTIDE SEQUENCE [GENOMIC DNA]</scope>
    <source>
        <strain>ATCC 204508 / S288c</strain>
    </source>
</reference>
<reference key="5">
    <citation type="journal article" date="2003" name="Nature">
        <title>Global analysis of protein expression in yeast.</title>
        <authorList>
            <person name="Ghaemmaghami S."/>
            <person name="Huh W.-K."/>
            <person name="Bower K."/>
            <person name="Howson R.W."/>
            <person name="Belle A."/>
            <person name="Dephoure N."/>
            <person name="O'Shea E.K."/>
            <person name="Weissman J.S."/>
        </authorList>
    </citation>
    <scope>LEVEL OF PROTEIN EXPRESSION [LARGE SCALE ANALYSIS]</scope>
</reference>
<gene>
    <name type="primary">MET16</name>
    <name type="ordered locus">YPR167C</name>
    <name type="ORF">P9325.8</name>
</gene>
<feature type="chain" id="PRO_0000100662" description="Phosphoadenosine phosphosulfate reductase">
    <location>
        <begin position="1"/>
        <end position="261"/>
    </location>
</feature>
<feature type="sequence conflict" description="In Ref. 1; AAA34774." evidence="2" ref="1">
    <original>KTECGIHEASRFAQFLKQDA</original>
    <variation>RPSVEFMKPADSRNF</variation>
    <location>
        <begin position="242"/>
        <end position="261"/>
    </location>
</feature>
<feature type="strand" evidence="3">
    <location>
        <begin position="3"/>
        <end position="5"/>
    </location>
</feature>
<feature type="helix" evidence="3">
    <location>
        <begin position="7"/>
        <end position="9"/>
    </location>
</feature>
<feature type="strand" evidence="3">
    <location>
        <begin position="11"/>
        <end position="13"/>
    </location>
</feature>
<feature type="helix" evidence="3">
    <location>
        <begin position="14"/>
        <end position="24"/>
    </location>
</feature>
<feature type="helix" evidence="3">
    <location>
        <begin position="30"/>
        <end position="40"/>
    </location>
</feature>
<feature type="strand" evidence="3">
    <location>
        <begin position="42"/>
        <end position="47"/>
    </location>
</feature>
<feature type="helix" evidence="3">
    <location>
        <begin position="52"/>
        <end position="64"/>
    </location>
</feature>
<feature type="turn" evidence="3">
    <location>
        <begin position="65"/>
        <end position="67"/>
    </location>
</feature>
<feature type="strand" evidence="3">
    <location>
        <begin position="72"/>
        <end position="76"/>
    </location>
</feature>
<feature type="helix" evidence="3">
    <location>
        <begin position="83"/>
        <end position="96"/>
    </location>
</feature>
<feature type="helix" evidence="3">
    <location>
        <begin position="98"/>
        <end position="100"/>
    </location>
</feature>
<feature type="strand" evidence="3">
    <location>
        <begin position="105"/>
        <end position="107"/>
    </location>
</feature>
<feature type="helix" evidence="3">
    <location>
        <begin position="115"/>
        <end position="122"/>
    </location>
</feature>
<feature type="helix" evidence="3">
    <location>
        <begin position="126"/>
        <end position="129"/>
    </location>
</feature>
<feature type="helix" evidence="3">
    <location>
        <begin position="131"/>
        <end position="138"/>
    </location>
</feature>
<feature type="helix" evidence="3">
    <location>
        <begin position="140"/>
        <end position="149"/>
    </location>
</feature>
<feature type="strand" evidence="3">
    <location>
        <begin position="153"/>
        <end position="156"/>
    </location>
</feature>
<feature type="helix" evidence="3">
    <location>
        <begin position="161"/>
        <end position="163"/>
    </location>
</feature>
<feature type="helix" evidence="3">
    <location>
        <begin position="165"/>
        <end position="169"/>
    </location>
</feature>
<feature type="strand" evidence="3">
    <location>
        <begin position="172"/>
        <end position="176"/>
    </location>
</feature>
<feature type="turn" evidence="3">
    <location>
        <begin position="177"/>
        <end position="180"/>
    </location>
</feature>
<feature type="strand" evidence="3">
    <location>
        <begin position="181"/>
        <end position="184"/>
    </location>
</feature>
<feature type="turn" evidence="3">
    <location>
        <begin position="186"/>
        <end position="189"/>
    </location>
</feature>
<feature type="helix" evidence="3">
    <location>
        <begin position="192"/>
        <end position="202"/>
    </location>
</feature>
<feature type="helix" evidence="3">
    <location>
        <begin position="208"/>
        <end position="212"/>
    </location>
</feature>
<feature type="helix" evidence="3">
    <location>
        <begin position="220"/>
        <end position="222"/>
    </location>
</feature>
<feature type="turn" evidence="3">
    <location>
        <begin position="232"/>
        <end position="236"/>
    </location>
</feature>
<feature type="turn" evidence="3">
    <location>
        <begin position="246"/>
        <end position="248"/>
    </location>
</feature>
<feature type="helix" evidence="3">
    <location>
        <begin position="251"/>
        <end position="253"/>
    </location>
</feature>
<organism>
    <name type="scientific">Saccharomyces cerevisiae (strain ATCC 204508 / S288c)</name>
    <name type="common">Baker's yeast</name>
    <dbReference type="NCBI Taxonomy" id="559292"/>
    <lineage>
        <taxon>Eukaryota</taxon>
        <taxon>Fungi</taxon>
        <taxon>Dikarya</taxon>
        <taxon>Ascomycota</taxon>
        <taxon>Saccharomycotina</taxon>
        <taxon>Saccharomycetes</taxon>
        <taxon>Saccharomycetales</taxon>
        <taxon>Saccharomycetaceae</taxon>
        <taxon>Saccharomyces</taxon>
    </lineage>
</organism>
<protein>
    <recommendedName>
        <fullName>Phosphoadenosine phosphosulfate reductase</fullName>
        <ecNumber>1.8.4.8</ecNumber>
    </recommendedName>
    <alternativeName>
        <fullName>3'-phosphoadenylylsulfate reductase</fullName>
    </alternativeName>
    <alternativeName>
        <fullName>PAPS reductase, thioredoxin dependent</fullName>
    </alternativeName>
    <alternativeName>
        <fullName>PAdoPS reductase</fullName>
    </alternativeName>
</protein>
<proteinExistence type="evidence at protein level"/>
<name>MET16_YEAST</name>
<sequence>MKTYHLNNDIIVTQEQLDHWNEQLIKLETPQEIIAWSIVTFPHLFQTTAFGLTGLVTIDMLSKLSEKYYMPELLFIDTLHHFPQTLTLKNEIEKKYYQPKNQTIHVYKPDGCESEADFASKYGDFLWEKDDDKYDYLAKVEPAHRAYKELHISAVFTGRRKSQGSARSQLSIIEIDELNGILKINPLINWTFEQVKQYIDANNVPYNELLDLGYRSIGDYHSTQPVKEGEDERAGRWKGKAKTECGIHEASRFAQFLKQDA</sequence>
<accession>P18408</accession>
<accession>D6W4G8</accession>
<accession>Q06212</accession>
<dbReference type="EC" id="1.8.4.8"/>
<dbReference type="EMBL" id="J05591">
    <property type="protein sequence ID" value="AAA34774.1"/>
    <property type="molecule type" value="Genomic_DNA"/>
</dbReference>
<dbReference type="EMBL" id="U25840">
    <property type="protein sequence ID" value="AAB68154.1"/>
    <property type="molecule type" value="Genomic_DNA"/>
</dbReference>
<dbReference type="EMBL" id="AY693236">
    <property type="protein sequence ID" value="AAT93255.1"/>
    <property type="molecule type" value="Genomic_DNA"/>
</dbReference>
<dbReference type="EMBL" id="BK006949">
    <property type="protein sequence ID" value="DAA11584.1"/>
    <property type="molecule type" value="Genomic_DNA"/>
</dbReference>
<dbReference type="PIR" id="S59826">
    <property type="entry name" value="S59826"/>
</dbReference>
<dbReference type="RefSeq" id="NP_015493.1">
    <property type="nucleotide sequence ID" value="NM_001184264.1"/>
</dbReference>
<dbReference type="PDB" id="2OQ2">
    <property type="method" value="X-ray"/>
    <property type="resolution" value="2.10 A"/>
    <property type="chains" value="A/B/C/D=1-261"/>
</dbReference>
<dbReference type="PDBsum" id="2OQ2"/>
<dbReference type="SMR" id="P18408"/>
<dbReference type="BioGRID" id="36340">
    <property type="interactions" value="110"/>
</dbReference>
<dbReference type="DIP" id="DIP-6611N"/>
<dbReference type="FunCoup" id="P18408">
    <property type="interactions" value="852"/>
</dbReference>
<dbReference type="IntAct" id="P18408">
    <property type="interactions" value="1"/>
</dbReference>
<dbReference type="STRING" id="4932.YPR167C"/>
<dbReference type="iPTMnet" id="P18408"/>
<dbReference type="PaxDb" id="4932-YPR167C"/>
<dbReference type="PeptideAtlas" id="P18408"/>
<dbReference type="EnsemblFungi" id="YPR167C_mRNA">
    <property type="protein sequence ID" value="YPR167C"/>
    <property type="gene ID" value="YPR167C"/>
</dbReference>
<dbReference type="GeneID" id="856296"/>
<dbReference type="KEGG" id="sce:YPR167C"/>
<dbReference type="AGR" id="SGD:S000006371"/>
<dbReference type="SGD" id="S000006371">
    <property type="gene designation" value="MET16"/>
</dbReference>
<dbReference type="VEuPathDB" id="FungiDB:YPR167C"/>
<dbReference type="eggNOG" id="KOG0189">
    <property type="taxonomic scope" value="Eukaryota"/>
</dbReference>
<dbReference type="HOGENOM" id="CLU_044089_0_1_1"/>
<dbReference type="InParanoid" id="P18408"/>
<dbReference type="OMA" id="PIARWTQ"/>
<dbReference type="OrthoDB" id="7869097at2759"/>
<dbReference type="BioCyc" id="MetaCyc:YPR167C-MONOMER"/>
<dbReference type="BioCyc" id="YEAST:YPR167C-MONOMER"/>
<dbReference type="UniPathway" id="UPA00140">
    <property type="reaction ID" value="UER00206"/>
</dbReference>
<dbReference type="BioGRID-ORCS" id="856296">
    <property type="hits" value="0 hits in 10 CRISPR screens"/>
</dbReference>
<dbReference type="EvolutionaryTrace" id="P18408"/>
<dbReference type="PRO" id="PR:P18408"/>
<dbReference type="Proteomes" id="UP000002311">
    <property type="component" value="Chromosome XVI"/>
</dbReference>
<dbReference type="RNAct" id="P18408">
    <property type="molecule type" value="protein"/>
</dbReference>
<dbReference type="GO" id="GO:0005737">
    <property type="term" value="C:cytoplasm"/>
    <property type="evidence" value="ECO:0000305"/>
    <property type="project" value="SGD"/>
</dbReference>
<dbReference type="GO" id="GO:0005829">
    <property type="term" value="C:cytosol"/>
    <property type="evidence" value="ECO:0000304"/>
    <property type="project" value="Reactome"/>
</dbReference>
<dbReference type="GO" id="GO:0098624">
    <property type="term" value="F:3'-phosphoadenylylselenate reductase activity"/>
    <property type="evidence" value="ECO:0000304"/>
    <property type="project" value="Reactome"/>
</dbReference>
<dbReference type="GO" id="GO:0004604">
    <property type="term" value="F:phosphoadenylyl-sulfate reductase (thioredoxin) activity"/>
    <property type="evidence" value="ECO:0000314"/>
    <property type="project" value="SGD"/>
</dbReference>
<dbReference type="GO" id="GO:0019344">
    <property type="term" value="P:cysteine biosynthetic process"/>
    <property type="evidence" value="ECO:0007669"/>
    <property type="project" value="UniProtKB-KW"/>
</dbReference>
<dbReference type="GO" id="GO:0006750">
    <property type="term" value="P:glutathione biosynthetic process"/>
    <property type="evidence" value="ECO:0000315"/>
    <property type="project" value="CACAO"/>
</dbReference>
<dbReference type="GO" id="GO:0070814">
    <property type="term" value="P:hydrogen sulfide biosynthetic process"/>
    <property type="evidence" value="ECO:0007669"/>
    <property type="project" value="UniProtKB-UniPathway"/>
</dbReference>
<dbReference type="GO" id="GO:0009086">
    <property type="term" value="P:methionine biosynthetic process"/>
    <property type="evidence" value="ECO:0007669"/>
    <property type="project" value="UniProtKB-KW"/>
</dbReference>
<dbReference type="GO" id="GO:0019379">
    <property type="term" value="P:sulfate assimilation, phosphoadenylyl sulfate reduction by phosphoadenylyl-sulfate reductase (thioredoxin)"/>
    <property type="evidence" value="ECO:0000314"/>
    <property type="project" value="SGD"/>
</dbReference>
<dbReference type="CDD" id="cd23945">
    <property type="entry name" value="PAPS_reductase"/>
    <property type="match status" value="1"/>
</dbReference>
<dbReference type="FunFam" id="3.40.50.620:FF:000151">
    <property type="entry name" value="Phosphoadenosine phosphosulfate reductase"/>
    <property type="match status" value="1"/>
</dbReference>
<dbReference type="Gene3D" id="3.40.50.620">
    <property type="entry name" value="HUPs"/>
    <property type="match status" value="1"/>
</dbReference>
<dbReference type="HAMAP" id="MF_00063">
    <property type="entry name" value="CysH"/>
    <property type="match status" value="1"/>
</dbReference>
<dbReference type="InterPro" id="IPR004511">
    <property type="entry name" value="PAPS/APS_Rdtase"/>
</dbReference>
<dbReference type="InterPro" id="IPR002500">
    <property type="entry name" value="PAPS_reduct_dom"/>
</dbReference>
<dbReference type="InterPro" id="IPR011800">
    <property type="entry name" value="PAPS_reductase_CysH"/>
</dbReference>
<dbReference type="InterPro" id="IPR014729">
    <property type="entry name" value="Rossmann-like_a/b/a_fold"/>
</dbReference>
<dbReference type="NCBIfam" id="TIGR00434">
    <property type="entry name" value="cysH"/>
    <property type="match status" value="1"/>
</dbReference>
<dbReference type="NCBIfam" id="TIGR02057">
    <property type="entry name" value="PAPS_reductase"/>
    <property type="match status" value="1"/>
</dbReference>
<dbReference type="NCBIfam" id="NF002537">
    <property type="entry name" value="PRK02090.1"/>
    <property type="match status" value="1"/>
</dbReference>
<dbReference type="PANTHER" id="PTHR46509">
    <property type="entry name" value="PHOSPHOADENOSINE PHOSPHOSULFATE REDUCTASE"/>
    <property type="match status" value="1"/>
</dbReference>
<dbReference type="PANTHER" id="PTHR46509:SF1">
    <property type="entry name" value="PHOSPHOADENOSINE PHOSPHOSULFATE REDUCTASE"/>
    <property type="match status" value="1"/>
</dbReference>
<dbReference type="Pfam" id="PF01507">
    <property type="entry name" value="PAPS_reduct"/>
    <property type="match status" value="1"/>
</dbReference>
<dbReference type="PIRSF" id="PIRSF000857">
    <property type="entry name" value="PAPS_reductase"/>
    <property type="match status" value="1"/>
</dbReference>
<dbReference type="SUPFAM" id="SSF52402">
    <property type="entry name" value="Adenine nucleotide alpha hydrolases-like"/>
    <property type="match status" value="1"/>
</dbReference>
<keyword id="KW-0002">3D-structure</keyword>
<keyword id="KW-0028">Amino-acid biosynthesis</keyword>
<keyword id="KW-0198">Cysteine biosynthesis</keyword>
<keyword id="KW-0486">Methionine biosynthesis</keyword>
<keyword id="KW-0521">NADP</keyword>
<keyword id="KW-0560">Oxidoreductase</keyword>
<keyword id="KW-1185">Reference proteome</keyword>